<keyword id="KW-0067">ATP-binding</keyword>
<keyword id="KW-0238">DNA-binding</keyword>
<keyword id="KW-0479">Metal-binding</keyword>
<keyword id="KW-0547">Nucleotide-binding</keyword>
<keyword id="KW-0678">Repressor</keyword>
<keyword id="KW-0804">Transcription</keyword>
<keyword id="KW-0805">Transcription regulation</keyword>
<keyword id="KW-0862">Zinc</keyword>
<keyword id="KW-0863">Zinc-finger</keyword>
<proteinExistence type="inferred from homology"/>
<organism>
    <name type="scientific">Coxiella burnetii (strain CbuK_Q154)</name>
    <name type="common">Coxiella burnetii (strain Q154)</name>
    <dbReference type="NCBI Taxonomy" id="434924"/>
    <lineage>
        <taxon>Bacteria</taxon>
        <taxon>Pseudomonadati</taxon>
        <taxon>Pseudomonadota</taxon>
        <taxon>Gammaproteobacteria</taxon>
        <taxon>Legionellales</taxon>
        <taxon>Coxiellaceae</taxon>
        <taxon>Coxiella</taxon>
    </lineage>
</organism>
<sequence length="157" mass="18579">MYCPFCNAEDTKVIDSRLVEEGTQVRRRRECLKCQERFTTFETAELNLPRIIKRDGRRSAFDEEKLRAGLLKALEKRPISTEQIETAVQRIIHKLRARGECEVSSQWLGELVMDELRALDEVAYVRFASVYRSFQDINAFRDEIRRLQKQQKKSHDK</sequence>
<comment type="function">
    <text evidence="1">Negatively regulates transcription of bacterial ribonucleotide reductase nrd genes and operons by binding to NrdR-boxes.</text>
</comment>
<comment type="cofactor">
    <cofactor evidence="1">
        <name>Zn(2+)</name>
        <dbReference type="ChEBI" id="CHEBI:29105"/>
    </cofactor>
    <text evidence="1">Binds 1 zinc ion.</text>
</comment>
<comment type="similarity">
    <text evidence="1">Belongs to the NrdR family.</text>
</comment>
<dbReference type="EMBL" id="CP001020">
    <property type="protein sequence ID" value="ACJ20657.1"/>
    <property type="molecule type" value="Genomic_DNA"/>
</dbReference>
<dbReference type="RefSeq" id="WP_005771735.1">
    <property type="nucleotide sequence ID" value="NC_011528.1"/>
</dbReference>
<dbReference type="SMR" id="B6J8Q8"/>
<dbReference type="KEGG" id="cbc:CbuK_1491"/>
<dbReference type="HOGENOM" id="CLU_108412_0_0_6"/>
<dbReference type="GO" id="GO:0005524">
    <property type="term" value="F:ATP binding"/>
    <property type="evidence" value="ECO:0007669"/>
    <property type="project" value="UniProtKB-KW"/>
</dbReference>
<dbReference type="GO" id="GO:0003677">
    <property type="term" value="F:DNA binding"/>
    <property type="evidence" value="ECO:0007669"/>
    <property type="project" value="UniProtKB-KW"/>
</dbReference>
<dbReference type="GO" id="GO:0008270">
    <property type="term" value="F:zinc ion binding"/>
    <property type="evidence" value="ECO:0007669"/>
    <property type="project" value="UniProtKB-UniRule"/>
</dbReference>
<dbReference type="GO" id="GO:0045892">
    <property type="term" value="P:negative regulation of DNA-templated transcription"/>
    <property type="evidence" value="ECO:0007669"/>
    <property type="project" value="UniProtKB-UniRule"/>
</dbReference>
<dbReference type="HAMAP" id="MF_00440">
    <property type="entry name" value="NrdR"/>
    <property type="match status" value="1"/>
</dbReference>
<dbReference type="InterPro" id="IPR005144">
    <property type="entry name" value="ATP-cone_dom"/>
</dbReference>
<dbReference type="InterPro" id="IPR055173">
    <property type="entry name" value="NrdR-like_N"/>
</dbReference>
<dbReference type="InterPro" id="IPR003796">
    <property type="entry name" value="RNR_NrdR-like"/>
</dbReference>
<dbReference type="NCBIfam" id="TIGR00244">
    <property type="entry name" value="transcriptional regulator NrdR"/>
    <property type="match status" value="1"/>
</dbReference>
<dbReference type="PANTHER" id="PTHR30455">
    <property type="entry name" value="TRANSCRIPTIONAL REPRESSOR NRDR"/>
    <property type="match status" value="1"/>
</dbReference>
<dbReference type="PANTHER" id="PTHR30455:SF2">
    <property type="entry name" value="TRANSCRIPTIONAL REPRESSOR NRDR"/>
    <property type="match status" value="1"/>
</dbReference>
<dbReference type="Pfam" id="PF03477">
    <property type="entry name" value="ATP-cone"/>
    <property type="match status" value="1"/>
</dbReference>
<dbReference type="Pfam" id="PF22811">
    <property type="entry name" value="Zn_ribbon_NrdR"/>
    <property type="match status" value="1"/>
</dbReference>
<dbReference type="PROSITE" id="PS51161">
    <property type="entry name" value="ATP_CONE"/>
    <property type="match status" value="1"/>
</dbReference>
<accession>B6J8Q8</accession>
<name>NRDR_COXB1</name>
<evidence type="ECO:0000255" key="1">
    <source>
        <dbReference type="HAMAP-Rule" id="MF_00440"/>
    </source>
</evidence>
<reference key="1">
    <citation type="journal article" date="2009" name="Infect. Immun.">
        <title>Comparative genomics reveal extensive transposon-mediated genomic plasticity and diversity among potential effector proteins within the genus Coxiella.</title>
        <authorList>
            <person name="Beare P.A."/>
            <person name="Unsworth N."/>
            <person name="Andoh M."/>
            <person name="Voth D.E."/>
            <person name="Omsland A."/>
            <person name="Gilk S.D."/>
            <person name="Williams K.P."/>
            <person name="Sobral B.W."/>
            <person name="Kupko J.J. III"/>
            <person name="Porcella S.F."/>
            <person name="Samuel J.E."/>
            <person name="Heinzen R.A."/>
        </authorList>
    </citation>
    <scope>NUCLEOTIDE SEQUENCE [LARGE SCALE GENOMIC DNA]</scope>
    <source>
        <strain>CbuK_Q154</strain>
    </source>
</reference>
<gene>
    <name evidence="1" type="primary">nrdR</name>
    <name type="ordered locus">CbuK_1491</name>
</gene>
<feature type="chain" id="PRO_1000124488" description="Transcriptional repressor NrdR">
    <location>
        <begin position="1"/>
        <end position="157"/>
    </location>
</feature>
<feature type="domain" description="ATP-cone" evidence="1">
    <location>
        <begin position="49"/>
        <end position="139"/>
    </location>
</feature>
<feature type="zinc finger region" evidence="1">
    <location>
        <begin position="3"/>
        <end position="34"/>
    </location>
</feature>
<protein>
    <recommendedName>
        <fullName evidence="1">Transcriptional repressor NrdR</fullName>
    </recommendedName>
</protein>